<keyword id="KW-0547">Nucleotide-binding</keyword>
<keyword id="KW-1185">Reference proteome</keyword>
<sequence>MAAKEASFDVVSEVNMEEVKNAIQIALKELKNRFDFKGSIADIKLENDKLVVVAEDDYKVEQVKDILFGKLVKRNVPIKNIHFSESEKALGGTARQYGDLISGIDKENAKKINTAIKNSGIKVKSQIQEDKIRVTGKSRDDLQKVMALLRELDLPMALEFNNYR</sequence>
<protein>
    <recommendedName>
        <fullName evidence="1">Nucleotide-binding protein EF_1165</fullName>
    </recommendedName>
</protein>
<gene>
    <name type="ordered locus">EF_1165</name>
</gene>
<name>Y1165_ENTFA</name>
<evidence type="ECO:0000255" key="1">
    <source>
        <dbReference type="HAMAP-Rule" id="MF_00632"/>
    </source>
</evidence>
<feature type="chain" id="PRO_0000106183" description="Nucleotide-binding protein EF_1165">
    <location>
        <begin position="1"/>
        <end position="164"/>
    </location>
</feature>
<accession>Q836E9</accession>
<reference key="1">
    <citation type="journal article" date="2003" name="Science">
        <title>Role of mobile DNA in the evolution of vancomycin-resistant Enterococcus faecalis.</title>
        <authorList>
            <person name="Paulsen I.T."/>
            <person name="Banerjei L."/>
            <person name="Myers G.S.A."/>
            <person name="Nelson K.E."/>
            <person name="Seshadri R."/>
            <person name="Read T.D."/>
            <person name="Fouts D.E."/>
            <person name="Eisen J.A."/>
            <person name="Gill S.R."/>
            <person name="Heidelberg J.F."/>
            <person name="Tettelin H."/>
            <person name="Dodson R.J."/>
            <person name="Umayam L.A."/>
            <person name="Brinkac L.M."/>
            <person name="Beanan M.J."/>
            <person name="Daugherty S.C."/>
            <person name="DeBoy R.T."/>
            <person name="Durkin S.A."/>
            <person name="Kolonay J.F."/>
            <person name="Madupu R."/>
            <person name="Nelson W.C."/>
            <person name="Vamathevan J.J."/>
            <person name="Tran B."/>
            <person name="Upton J."/>
            <person name="Hansen T."/>
            <person name="Shetty J."/>
            <person name="Khouri H.M."/>
            <person name="Utterback T.R."/>
            <person name="Radune D."/>
            <person name="Ketchum K.A."/>
            <person name="Dougherty B.A."/>
            <person name="Fraser C.M."/>
        </authorList>
    </citation>
    <scope>NUCLEOTIDE SEQUENCE [LARGE SCALE GENOMIC DNA]</scope>
    <source>
        <strain>ATCC 700802 / V583</strain>
    </source>
</reference>
<dbReference type="EMBL" id="AE016830">
    <property type="protein sequence ID" value="AAO80965.1"/>
    <property type="molecule type" value="Genomic_DNA"/>
</dbReference>
<dbReference type="RefSeq" id="NP_814895.1">
    <property type="nucleotide sequence ID" value="NC_004668.1"/>
</dbReference>
<dbReference type="RefSeq" id="WP_002357974.1">
    <property type="nucleotide sequence ID" value="NZ_KE136528.1"/>
</dbReference>
<dbReference type="SMR" id="Q836E9"/>
<dbReference type="STRING" id="226185.EF_1165"/>
<dbReference type="EnsemblBacteria" id="AAO80965">
    <property type="protein sequence ID" value="AAO80965"/>
    <property type="gene ID" value="EF_1165"/>
</dbReference>
<dbReference type="KEGG" id="efa:EF1165"/>
<dbReference type="PATRIC" id="fig|226185.45.peg.2331"/>
<dbReference type="eggNOG" id="COG1666">
    <property type="taxonomic scope" value="Bacteria"/>
</dbReference>
<dbReference type="HOGENOM" id="CLU_099839_1_0_9"/>
<dbReference type="Proteomes" id="UP000001415">
    <property type="component" value="Chromosome"/>
</dbReference>
<dbReference type="GO" id="GO:0005829">
    <property type="term" value="C:cytosol"/>
    <property type="evidence" value="ECO:0007669"/>
    <property type="project" value="TreeGrafter"/>
</dbReference>
<dbReference type="GO" id="GO:0000166">
    <property type="term" value="F:nucleotide binding"/>
    <property type="evidence" value="ECO:0007669"/>
    <property type="project" value="TreeGrafter"/>
</dbReference>
<dbReference type="CDD" id="cd11740">
    <property type="entry name" value="YajQ_like"/>
    <property type="match status" value="1"/>
</dbReference>
<dbReference type="Gene3D" id="3.30.70.860">
    <property type="match status" value="1"/>
</dbReference>
<dbReference type="Gene3D" id="3.30.70.990">
    <property type="entry name" value="YajQ-like, domain 2"/>
    <property type="match status" value="1"/>
</dbReference>
<dbReference type="HAMAP" id="MF_00632">
    <property type="entry name" value="YajQ"/>
    <property type="match status" value="1"/>
</dbReference>
<dbReference type="InterPro" id="IPR007551">
    <property type="entry name" value="DUF520"/>
</dbReference>
<dbReference type="InterPro" id="IPR035571">
    <property type="entry name" value="UPF0234-like_C"/>
</dbReference>
<dbReference type="InterPro" id="IPR035570">
    <property type="entry name" value="UPF0234_N"/>
</dbReference>
<dbReference type="InterPro" id="IPR036183">
    <property type="entry name" value="YajQ-like_sf"/>
</dbReference>
<dbReference type="NCBIfam" id="NF003819">
    <property type="entry name" value="PRK05412.1"/>
    <property type="match status" value="1"/>
</dbReference>
<dbReference type="PANTHER" id="PTHR30476">
    <property type="entry name" value="UPF0234 PROTEIN YAJQ"/>
    <property type="match status" value="1"/>
</dbReference>
<dbReference type="PANTHER" id="PTHR30476:SF0">
    <property type="entry name" value="UPF0234 PROTEIN YAJQ"/>
    <property type="match status" value="1"/>
</dbReference>
<dbReference type="Pfam" id="PF04461">
    <property type="entry name" value="DUF520"/>
    <property type="match status" value="1"/>
</dbReference>
<dbReference type="SUPFAM" id="SSF89963">
    <property type="entry name" value="YajQ-like"/>
    <property type="match status" value="2"/>
</dbReference>
<organism>
    <name type="scientific">Enterococcus faecalis (strain ATCC 700802 / V583)</name>
    <dbReference type="NCBI Taxonomy" id="226185"/>
    <lineage>
        <taxon>Bacteria</taxon>
        <taxon>Bacillati</taxon>
        <taxon>Bacillota</taxon>
        <taxon>Bacilli</taxon>
        <taxon>Lactobacillales</taxon>
        <taxon>Enterococcaceae</taxon>
        <taxon>Enterococcus</taxon>
    </lineage>
</organism>
<comment type="function">
    <text evidence="1">Nucleotide-binding protein.</text>
</comment>
<comment type="similarity">
    <text evidence="1">Belongs to the YajQ family.</text>
</comment>
<proteinExistence type="inferred from homology"/>